<evidence type="ECO:0000255" key="1">
    <source>
        <dbReference type="HAMAP-Rule" id="MF_00530"/>
    </source>
</evidence>
<evidence type="ECO:0000269" key="2">
    <source>
    </source>
</evidence>
<evidence type="ECO:0000269" key="3">
    <source>
    </source>
</evidence>
<evidence type="ECO:0007829" key="4">
    <source>
        <dbReference type="PDB" id="5ZWL"/>
    </source>
</evidence>
<sequence>MVMTVRVIAPDKTVWDAPAEEVILPSTTGQLGILSNHAPLLTALETGVMRVRQDREWVAIALMGGFAEVENNEVTILVNGAERGDTIDLEKAKAEFAAAQAALAQAEQGESKQAKIQATQAFRRARARLQAAGGVVEI</sequence>
<dbReference type="EMBL" id="BA000039">
    <property type="protein sequence ID" value="BAC08078.1"/>
    <property type="molecule type" value="Genomic_DNA"/>
</dbReference>
<dbReference type="RefSeq" id="NP_681316.1">
    <property type="nucleotide sequence ID" value="NC_004113.1"/>
</dbReference>
<dbReference type="RefSeq" id="WP_011056376.1">
    <property type="nucleotide sequence ID" value="NC_004113.1"/>
</dbReference>
<dbReference type="PDB" id="2RQ6">
    <property type="method" value="NMR"/>
    <property type="chains" value="A=1-138"/>
</dbReference>
<dbReference type="PDB" id="2RQ7">
    <property type="method" value="NMR"/>
    <property type="chains" value="A=1-88"/>
</dbReference>
<dbReference type="PDB" id="5ZWL">
    <property type="method" value="X-ray"/>
    <property type="resolution" value="1.98 A"/>
    <property type="chains" value="E=1-138"/>
</dbReference>
<dbReference type="PDBsum" id="2RQ6"/>
<dbReference type="PDBsum" id="2RQ7"/>
<dbReference type="PDBsum" id="5ZWL"/>
<dbReference type="SMR" id="Q8DLG7"/>
<dbReference type="STRING" id="197221.gene:10747115"/>
<dbReference type="EnsemblBacteria" id="BAC08078">
    <property type="protein sequence ID" value="BAC08078"/>
    <property type="gene ID" value="BAC08078"/>
</dbReference>
<dbReference type="KEGG" id="tel:tlr0526"/>
<dbReference type="PATRIC" id="fig|197221.4.peg.554"/>
<dbReference type="eggNOG" id="COG0355">
    <property type="taxonomic scope" value="Bacteria"/>
</dbReference>
<dbReference type="EvolutionaryTrace" id="Q8DLG7"/>
<dbReference type="Proteomes" id="UP000000440">
    <property type="component" value="Chromosome"/>
</dbReference>
<dbReference type="GO" id="GO:0031676">
    <property type="term" value="C:plasma membrane-derived thylakoid membrane"/>
    <property type="evidence" value="ECO:0007669"/>
    <property type="project" value="UniProtKB-SubCell"/>
</dbReference>
<dbReference type="GO" id="GO:0045259">
    <property type="term" value="C:proton-transporting ATP synthase complex"/>
    <property type="evidence" value="ECO:0007669"/>
    <property type="project" value="UniProtKB-KW"/>
</dbReference>
<dbReference type="GO" id="GO:0005524">
    <property type="term" value="F:ATP binding"/>
    <property type="evidence" value="ECO:0007669"/>
    <property type="project" value="UniProtKB-UniRule"/>
</dbReference>
<dbReference type="GO" id="GO:0046933">
    <property type="term" value="F:proton-transporting ATP synthase activity, rotational mechanism"/>
    <property type="evidence" value="ECO:0007669"/>
    <property type="project" value="UniProtKB-UniRule"/>
</dbReference>
<dbReference type="CDD" id="cd12152">
    <property type="entry name" value="F1-ATPase_delta"/>
    <property type="match status" value="1"/>
</dbReference>
<dbReference type="Gene3D" id="2.60.15.10">
    <property type="entry name" value="F0F1 ATP synthase delta/epsilon subunit, N-terminal"/>
    <property type="match status" value="1"/>
</dbReference>
<dbReference type="Gene3D" id="1.10.287.540">
    <property type="entry name" value="Helix hairpin bin"/>
    <property type="match status" value="1"/>
</dbReference>
<dbReference type="HAMAP" id="MF_00530">
    <property type="entry name" value="ATP_synth_epsil_bac"/>
    <property type="match status" value="1"/>
</dbReference>
<dbReference type="InterPro" id="IPR001469">
    <property type="entry name" value="ATP_synth_F1_dsu/esu"/>
</dbReference>
<dbReference type="InterPro" id="IPR020546">
    <property type="entry name" value="ATP_synth_F1_dsu/esu_N"/>
</dbReference>
<dbReference type="InterPro" id="IPR020547">
    <property type="entry name" value="ATP_synth_F1_esu_C"/>
</dbReference>
<dbReference type="InterPro" id="IPR036771">
    <property type="entry name" value="ATPsynth_dsu/esu_N"/>
</dbReference>
<dbReference type="NCBIfam" id="TIGR01216">
    <property type="entry name" value="ATP_synt_epsi"/>
    <property type="match status" value="1"/>
</dbReference>
<dbReference type="NCBIfam" id="NF009977">
    <property type="entry name" value="PRK13442.1"/>
    <property type="match status" value="1"/>
</dbReference>
<dbReference type="PANTHER" id="PTHR13822">
    <property type="entry name" value="ATP SYNTHASE DELTA/EPSILON CHAIN"/>
    <property type="match status" value="1"/>
</dbReference>
<dbReference type="PANTHER" id="PTHR13822:SF10">
    <property type="entry name" value="ATP SYNTHASE EPSILON CHAIN, CHLOROPLASTIC"/>
    <property type="match status" value="1"/>
</dbReference>
<dbReference type="Pfam" id="PF00401">
    <property type="entry name" value="ATP-synt_DE"/>
    <property type="match status" value="1"/>
</dbReference>
<dbReference type="Pfam" id="PF02823">
    <property type="entry name" value="ATP-synt_DE_N"/>
    <property type="match status" value="1"/>
</dbReference>
<dbReference type="SUPFAM" id="SSF51344">
    <property type="entry name" value="Epsilon subunit of F1F0-ATP synthase N-terminal domain"/>
    <property type="match status" value="1"/>
</dbReference>
<protein>
    <recommendedName>
        <fullName evidence="1">ATP synthase epsilon chain</fullName>
    </recommendedName>
    <alternativeName>
        <fullName evidence="1">ATP synthase F1 sector epsilon subunit</fullName>
    </alternativeName>
    <alternativeName>
        <fullName evidence="1">F-ATPase epsilon subunit</fullName>
    </alternativeName>
    <component>
        <recommendedName>
            <fullName>ATP synthase epsilon chain, N-terminally processed</fullName>
        </recommendedName>
    </component>
</protein>
<reference key="1">
    <citation type="journal article" date="2002" name="DNA Res.">
        <title>Complete genome structure of the thermophilic cyanobacterium Thermosynechococcus elongatus BP-1.</title>
        <authorList>
            <person name="Nakamura Y."/>
            <person name="Kaneko T."/>
            <person name="Sato S."/>
            <person name="Ikeuchi M."/>
            <person name="Katoh H."/>
            <person name="Sasamoto S."/>
            <person name="Watanabe A."/>
            <person name="Iriguchi M."/>
            <person name="Kawashima K."/>
            <person name="Kimura T."/>
            <person name="Kishida Y."/>
            <person name="Kiyokawa C."/>
            <person name="Kohara M."/>
            <person name="Matsumoto M."/>
            <person name="Matsuno A."/>
            <person name="Nakazaki N."/>
            <person name="Shimpo S."/>
            <person name="Sugimoto M."/>
            <person name="Takeuchi C."/>
            <person name="Yamada M."/>
            <person name="Tabata S."/>
        </authorList>
    </citation>
    <scope>NUCLEOTIDE SEQUENCE [LARGE SCALE GENOMIC DNA]</scope>
    <source>
        <strain>NIES-2133 / IAM M-273 / BP-1</strain>
    </source>
</reference>
<reference key="2">
    <citation type="journal article" date="2008" name="Biochim. Biophys. Acta">
        <title>Remarkable stability of the proton translocating F1FO-ATP synthase from the thermophilic cyanobacterium Thermosynechococcus elongatus BP-1.</title>
        <authorList>
            <person name="Suhai T."/>
            <person name="Dencher N.A."/>
            <person name="Poetsch A."/>
            <person name="Seelert H."/>
        </authorList>
    </citation>
    <scope>FUNCTION</scope>
    <scope>MASS SPECTROMETRY</scope>
    <scope>SUBUNIT</scope>
    <scope>SUBCELLULAR LOCATION</scope>
</reference>
<reference key="3">
    <citation type="journal article" date="2010" name="J. Biol. Chem.">
        <title>Crystal structure of monomeric photosystem II from Thermosynechococcus elongatus at 3.6 A resolution.</title>
        <authorList>
            <person name="Broser M."/>
            <person name="Gabdulkhakov A."/>
            <person name="Kern J."/>
            <person name="Guskov A."/>
            <person name="Muh F."/>
            <person name="Saenger W."/>
            <person name="Zouni A."/>
        </authorList>
    </citation>
    <scope>SUBUNIT</scope>
    <scope>SUBCELLULAR LOCATION</scope>
    <scope>MASS SPECTROMETRY</scope>
    <source>
        <strain>NIES-2133 / IAM M-273 / BP-1</strain>
    </source>
</reference>
<name>ATPE_THEVB</name>
<comment type="function">
    <text evidence="2">Produces ATP from ADP in the presence of a proton gradient across the membrane.</text>
</comment>
<comment type="function">
    <text evidence="2">The complex from the organism is particularly stable to disruption and remains functional after 6 hours at 55 degrees Celsius.</text>
</comment>
<comment type="subunit">
    <text evidence="2 3">F-type ATPases have 2 components, CF(1) - the catalytic core - and CF(0) - the membrane proton channel. CF(1) has five subunits: alpha(3), beta(3), gamma(1), delta(1), epsilon(1). CF(0) has four main subunits: a(1), b(1), b'(1) and c(9-12).</text>
</comment>
<comment type="subcellular location">
    <subcellularLocation>
        <location evidence="1 2 3">Cellular thylakoid membrane</location>
        <topology evidence="1 2">Peripheral membrane protein</topology>
    </subcellularLocation>
</comment>
<comment type="mass spectrometry">
    <molecule>ATP synthase epsilon chain</molecule>
</comment>
<comment type="mass spectrometry">
    <molecule>ATP synthase epsilon chain, N-terminally processed</molecule>
</comment>
<comment type="similarity">
    <text evidence="1">Belongs to the ATPase epsilon chain family.</text>
</comment>
<organism>
    <name type="scientific">Thermosynechococcus vestitus (strain NIES-2133 / IAM M-273 / BP-1)</name>
    <dbReference type="NCBI Taxonomy" id="197221"/>
    <lineage>
        <taxon>Bacteria</taxon>
        <taxon>Bacillati</taxon>
        <taxon>Cyanobacteriota</taxon>
        <taxon>Cyanophyceae</taxon>
        <taxon>Acaryochloridales</taxon>
        <taxon>Thermosynechococcaceae</taxon>
        <taxon>Thermosynechococcus</taxon>
    </lineage>
</organism>
<keyword id="KW-0002">3D-structure</keyword>
<keyword id="KW-0066">ATP synthesis</keyword>
<keyword id="KW-0139">CF(1)</keyword>
<keyword id="KW-0375">Hydrogen ion transport</keyword>
<keyword id="KW-0406">Ion transport</keyword>
<keyword id="KW-0472">Membrane</keyword>
<keyword id="KW-1185">Reference proteome</keyword>
<keyword id="KW-0793">Thylakoid</keyword>
<keyword id="KW-0813">Transport</keyword>
<gene>
    <name evidence="1" type="primary">atpC</name>
    <name type="synonym">atpE</name>
    <name type="ordered locus">tlr0526</name>
</gene>
<feature type="chain" id="PRO_0000188225" description="ATP synthase epsilon chain">
    <location>
        <begin position="1"/>
        <end position="138"/>
    </location>
</feature>
<feature type="initiator methionine" description="Removed; alternate" evidence="2 3">
    <location>
        <position position="1"/>
    </location>
</feature>
<feature type="chain" id="PRO_0000430772" description="ATP synthase epsilon chain, N-terminally processed">
    <location>
        <begin position="2"/>
        <end position="138"/>
    </location>
</feature>
<feature type="strand" evidence="4">
    <location>
        <begin position="3"/>
        <end position="8"/>
    </location>
</feature>
<feature type="strand" evidence="4">
    <location>
        <begin position="10"/>
        <end position="26"/>
    </location>
</feature>
<feature type="strand" evidence="4">
    <location>
        <begin position="29"/>
        <end position="34"/>
    </location>
</feature>
<feature type="strand" evidence="4">
    <location>
        <begin position="40"/>
        <end position="70"/>
    </location>
</feature>
<feature type="strand" evidence="4">
    <location>
        <begin position="73"/>
        <end position="79"/>
    </location>
</feature>
<feature type="strand" evidence="4">
    <location>
        <begin position="81"/>
        <end position="83"/>
    </location>
</feature>
<feature type="helix" evidence="4">
    <location>
        <begin position="84"/>
        <end position="86"/>
    </location>
</feature>
<feature type="helix" evidence="4">
    <location>
        <begin position="89"/>
        <end position="108"/>
    </location>
</feature>
<feature type="helix" evidence="4">
    <location>
        <begin position="112"/>
        <end position="133"/>
    </location>
</feature>
<accession>Q8DLG7</accession>
<proteinExistence type="evidence at protein level"/>